<reference key="1">
    <citation type="journal article" date="2001" name="Genomics">
        <title>Molecular cloning of a human Vent-like homeobox gene.</title>
        <authorList>
            <person name="Moretti P.A.B."/>
            <person name="Davidson A.J."/>
            <person name="Baker E."/>
            <person name="Lilley B."/>
            <person name="Zon L.I."/>
            <person name="D'Andrea R.J."/>
        </authorList>
    </citation>
    <scope>NUCLEOTIDE SEQUENCE [GENOMIC DNA / MRNA]</scope>
    <scope>TISSUE SPECIFICITY</scope>
    <source>
        <tissue>Bone marrow</tissue>
    </source>
</reference>
<reference key="2">
    <citation type="journal article" date="2004" name="Nature">
        <title>The DNA sequence and comparative analysis of human chromosome 10.</title>
        <authorList>
            <person name="Deloukas P."/>
            <person name="Earthrowl M.E."/>
            <person name="Grafham D.V."/>
            <person name="Rubenfield M."/>
            <person name="French L."/>
            <person name="Steward C.A."/>
            <person name="Sims S.K."/>
            <person name="Jones M.C."/>
            <person name="Searle S."/>
            <person name="Scott C."/>
            <person name="Howe K."/>
            <person name="Hunt S.E."/>
            <person name="Andrews T.D."/>
            <person name="Gilbert J.G.R."/>
            <person name="Swarbreck D."/>
            <person name="Ashurst J.L."/>
            <person name="Taylor A."/>
            <person name="Battles J."/>
            <person name="Bird C.P."/>
            <person name="Ainscough R."/>
            <person name="Almeida J.P."/>
            <person name="Ashwell R.I.S."/>
            <person name="Ambrose K.D."/>
            <person name="Babbage A.K."/>
            <person name="Bagguley C.L."/>
            <person name="Bailey J."/>
            <person name="Banerjee R."/>
            <person name="Bates K."/>
            <person name="Beasley H."/>
            <person name="Bray-Allen S."/>
            <person name="Brown A.J."/>
            <person name="Brown J.Y."/>
            <person name="Burford D.C."/>
            <person name="Burrill W."/>
            <person name="Burton J."/>
            <person name="Cahill P."/>
            <person name="Camire D."/>
            <person name="Carter N.P."/>
            <person name="Chapman J.C."/>
            <person name="Clark S.Y."/>
            <person name="Clarke G."/>
            <person name="Clee C.M."/>
            <person name="Clegg S."/>
            <person name="Corby N."/>
            <person name="Coulson A."/>
            <person name="Dhami P."/>
            <person name="Dutta I."/>
            <person name="Dunn M."/>
            <person name="Faulkner L."/>
            <person name="Frankish A."/>
            <person name="Frankland J.A."/>
            <person name="Garner P."/>
            <person name="Garnett J."/>
            <person name="Gribble S."/>
            <person name="Griffiths C."/>
            <person name="Grocock R."/>
            <person name="Gustafson E."/>
            <person name="Hammond S."/>
            <person name="Harley J.L."/>
            <person name="Hart E."/>
            <person name="Heath P.D."/>
            <person name="Ho T.P."/>
            <person name="Hopkins B."/>
            <person name="Horne J."/>
            <person name="Howden P.J."/>
            <person name="Huckle E."/>
            <person name="Hynds C."/>
            <person name="Johnson C."/>
            <person name="Johnson D."/>
            <person name="Kana A."/>
            <person name="Kay M."/>
            <person name="Kimberley A.M."/>
            <person name="Kershaw J.K."/>
            <person name="Kokkinaki M."/>
            <person name="Laird G.K."/>
            <person name="Lawlor S."/>
            <person name="Lee H.M."/>
            <person name="Leongamornlert D.A."/>
            <person name="Laird G."/>
            <person name="Lloyd C."/>
            <person name="Lloyd D.M."/>
            <person name="Loveland J."/>
            <person name="Lovell J."/>
            <person name="McLaren S."/>
            <person name="McLay K.E."/>
            <person name="McMurray A."/>
            <person name="Mashreghi-Mohammadi M."/>
            <person name="Matthews L."/>
            <person name="Milne S."/>
            <person name="Nickerson T."/>
            <person name="Nguyen M."/>
            <person name="Overton-Larty E."/>
            <person name="Palmer S.A."/>
            <person name="Pearce A.V."/>
            <person name="Peck A.I."/>
            <person name="Pelan S."/>
            <person name="Phillimore B."/>
            <person name="Porter K."/>
            <person name="Rice C.M."/>
            <person name="Rogosin A."/>
            <person name="Ross M.T."/>
            <person name="Sarafidou T."/>
            <person name="Sehra H.K."/>
            <person name="Shownkeen R."/>
            <person name="Skuce C.D."/>
            <person name="Smith M."/>
            <person name="Standring L."/>
            <person name="Sycamore N."/>
            <person name="Tester J."/>
            <person name="Thorpe A."/>
            <person name="Torcasso W."/>
            <person name="Tracey A."/>
            <person name="Tromans A."/>
            <person name="Tsolas J."/>
            <person name="Wall M."/>
            <person name="Walsh J."/>
            <person name="Wang H."/>
            <person name="Weinstock K."/>
            <person name="West A.P."/>
            <person name="Willey D.L."/>
            <person name="Whitehead S.L."/>
            <person name="Wilming L."/>
            <person name="Wray P.W."/>
            <person name="Young L."/>
            <person name="Chen Y."/>
            <person name="Lovering R.C."/>
            <person name="Moschonas N.K."/>
            <person name="Siebert R."/>
            <person name="Fechtel K."/>
            <person name="Bentley D."/>
            <person name="Durbin R.M."/>
            <person name="Hubbard T."/>
            <person name="Doucette-Stamm L."/>
            <person name="Beck S."/>
            <person name="Smith D.R."/>
            <person name="Rogers J."/>
        </authorList>
    </citation>
    <scope>NUCLEOTIDE SEQUENCE [LARGE SCALE GENOMIC DNA]</scope>
</reference>
<reference key="3">
    <citation type="journal article" date="2004" name="Genome Res.">
        <title>The status, quality, and expansion of the NIH full-length cDNA project: the Mammalian Gene Collection (MGC).</title>
        <authorList>
            <consortium name="The MGC Project Team"/>
        </authorList>
    </citation>
    <scope>NUCLEOTIDE SEQUENCE [LARGE SCALE MRNA]</scope>
    <scope>VARIANT PRO-42</scope>
</reference>
<protein>
    <recommendedName>
        <fullName>Homeobox protein VENTX</fullName>
    </recommendedName>
    <alternativeName>
        <fullName>VENT homeobox homolog</fullName>
    </alternativeName>
    <alternativeName>
        <fullName>VENT-like homeobox protein 2</fullName>
    </alternativeName>
</protein>
<dbReference type="EMBL" id="AF068006">
    <property type="protein sequence ID" value="AAC82375.1"/>
    <property type="molecule type" value="mRNA"/>
</dbReference>
<dbReference type="EMBL" id="AF288039">
    <property type="protein sequence ID" value="AAK83043.1"/>
    <property type="molecule type" value="Genomic_DNA"/>
</dbReference>
<dbReference type="EMBL" id="AL445199">
    <property type="status" value="NOT_ANNOTATED_CDS"/>
    <property type="molecule type" value="Genomic_DNA"/>
</dbReference>
<dbReference type="EMBL" id="BC108915">
    <property type="protein sequence ID" value="AAI08916.1"/>
    <property type="molecule type" value="mRNA"/>
</dbReference>
<dbReference type="EMBL" id="BC108916">
    <property type="protein sequence ID" value="AAI08917.1"/>
    <property type="molecule type" value="mRNA"/>
</dbReference>
<dbReference type="CCDS" id="CCDS7675.1"/>
<dbReference type="RefSeq" id="NP_055283.1">
    <property type="nucleotide sequence ID" value="NM_014468.4"/>
</dbReference>
<dbReference type="SMR" id="O95231"/>
<dbReference type="BioGRID" id="118111">
    <property type="interactions" value="103"/>
</dbReference>
<dbReference type="FunCoup" id="O95231">
    <property type="interactions" value="558"/>
</dbReference>
<dbReference type="IntAct" id="O95231">
    <property type="interactions" value="90"/>
</dbReference>
<dbReference type="STRING" id="9606.ENSP00000357556"/>
<dbReference type="GlyGen" id="O95231">
    <property type="glycosylation" value="2 sites, 1 O-linked glycan (1 site)"/>
</dbReference>
<dbReference type="iPTMnet" id="O95231"/>
<dbReference type="PhosphoSitePlus" id="O95231"/>
<dbReference type="BioMuta" id="VENTX"/>
<dbReference type="PaxDb" id="9606-ENSP00000357556"/>
<dbReference type="PeptideAtlas" id="O95231"/>
<dbReference type="ProteomicsDB" id="50729"/>
<dbReference type="ABCD" id="O95231">
    <property type="antibodies" value="3 sequenced antibodies"/>
</dbReference>
<dbReference type="Antibodypedia" id="32622">
    <property type="antibodies" value="173 antibodies from 28 providers"/>
</dbReference>
<dbReference type="DNASU" id="27287"/>
<dbReference type="Ensembl" id="ENST00000325980.10">
    <property type="protein sequence ID" value="ENSP00000357556.5"/>
    <property type="gene ID" value="ENSG00000151650.8"/>
</dbReference>
<dbReference type="GeneID" id="27287"/>
<dbReference type="KEGG" id="hsa:27287"/>
<dbReference type="MANE-Select" id="ENST00000325980.10">
    <property type="protein sequence ID" value="ENSP00000357556.5"/>
    <property type="RefSeq nucleotide sequence ID" value="NM_014468.4"/>
    <property type="RefSeq protein sequence ID" value="NP_055283.1"/>
</dbReference>
<dbReference type="UCSC" id="uc010quy.3">
    <property type="organism name" value="human"/>
</dbReference>
<dbReference type="AGR" id="HGNC:13639"/>
<dbReference type="CTD" id="27287"/>
<dbReference type="DisGeNET" id="27287"/>
<dbReference type="GeneCards" id="VENTX"/>
<dbReference type="HGNC" id="HGNC:13639">
    <property type="gene designation" value="VENTX"/>
</dbReference>
<dbReference type="HPA" id="ENSG00000151650">
    <property type="expression patterns" value="Low tissue specificity"/>
</dbReference>
<dbReference type="MIM" id="607158">
    <property type="type" value="gene"/>
</dbReference>
<dbReference type="neXtProt" id="NX_O95231"/>
<dbReference type="OpenTargets" id="ENSG00000151650"/>
<dbReference type="PharmGKB" id="PA37803"/>
<dbReference type="VEuPathDB" id="HostDB:ENSG00000151650"/>
<dbReference type="eggNOG" id="KOG0488">
    <property type="taxonomic scope" value="Eukaryota"/>
</dbReference>
<dbReference type="GeneTree" id="ENSGT00940000163757"/>
<dbReference type="HOGENOM" id="CLU_093885_0_0_1"/>
<dbReference type="InParanoid" id="O95231"/>
<dbReference type="OMA" id="FQHHQYL"/>
<dbReference type="OrthoDB" id="9481809at2759"/>
<dbReference type="PAN-GO" id="O95231">
    <property type="GO annotations" value="3 GO annotations based on evolutionary models"/>
</dbReference>
<dbReference type="PhylomeDB" id="O95231"/>
<dbReference type="TreeFam" id="TF351607"/>
<dbReference type="PathwayCommons" id="O95231"/>
<dbReference type="Reactome" id="R-HSA-2559582">
    <property type="pathway name" value="Senescence-Associated Secretory Phenotype (SASP)"/>
</dbReference>
<dbReference type="Reactome" id="R-HSA-8853884">
    <property type="pathway name" value="Transcriptional Regulation by VENTX"/>
</dbReference>
<dbReference type="SignaLink" id="O95231"/>
<dbReference type="BioGRID-ORCS" id="27287">
    <property type="hits" value="18 hits in 1173 CRISPR screens"/>
</dbReference>
<dbReference type="GenomeRNAi" id="27287"/>
<dbReference type="Pharos" id="O95231">
    <property type="development level" value="Tbio"/>
</dbReference>
<dbReference type="PRO" id="PR:O95231"/>
<dbReference type="Proteomes" id="UP000005640">
    <property type="component" value="Chromosome 10"/>
</dbReference>
<dbReference type="RNAct" id="O95231">
    <property type="molecule type" value="protein"/>
</dbReference>
<dbReference type="Bgee" id="ENSG00000151650">
    <property type="expression patterns" value="Expressed in granulocyte and 89 other cell types or tissues"/>
</dbReference>
<dbReference type="GO" id="GO:0000785">
    <property type="term" value="C:chromatin"/>
    <property type="evidence" value="ECO:0000247"/>
    <property type="project" value="NTNU_SB"/>
</dbReference>
<dbReference type="GO" id="GO:0005654">
    <property type="term" value="C:nucleoplasm"/>
    <property type="evidence" value="ECO:0000304"/>
    <property type="project" value="Reactome"/>
</dbReference>
<dbReference type="GO" id="GO:0001228">
    <property type="term" value="F:DNA-binding transcription activator activity, RNA polymerase II-specific"/>
    <property type="evidence" value="ECO:0000314"/>
    <property type="project" value="NTNU_SB"/>
</dbReference>
<dbReference type="GO" id="GO:0000981">
    <property type="term" value="F:DNA-binding transcription factor activity, RNA polymerase II-specific"/>
    <property type="evidence" value="ECO:0000247"/>
    <property type="project" value="NTNU_SB"/>
</dbReference>
<dbReference type="GO" id="GO:0000978">
    <property type="term" value="F:RNA polymerase II cis-regulatory region sequence-specific DNA binding"/>
    <property type="evidence" value="ECO:0000318"/>
    <property type="project" value="GO_Central"/>
</dbReference>
<dbReference type="GO" id="GO:0043565">
    <property type="term" value="F:sequence-specific DNA binding"/>
    <property type="evidence" value="ECO:0000315"/>
    <property type="project" value="NTNU_SB"/>
</dbReference>
<dbReference type="GO" id="GO:1990837">
    <property type="term" value="F:sequence-specific double-stranded DNA binding"/>
    <property type="evidence" value="ECO:0000314"/>
    <property type="project" value="ARUK-UCL"/>
</dbReference>
<dbReference type="GO" id="GO:0030154">
    <property type="term" value="P:cell differentiation"/>
    <property type="evidence" value="ECO:0000318"/>
    <property type="project" value="GO_Central"/>
</dbReference>
<dbReference type="GO" id="GO:0045944">
    <property type="term" value="P:positive regulation of transcription by RNA polymerase II"/>
    <property type="evidence" value="ECO:0000314"/>
    <property type="project" value="NTNU_SB"/>
</dbReference>
<dbReference type="GO" id="GO:0006357">
    <property type="term" value="P:regulation of transcription by RNA polymerase II"/>
    <property type="evidence" value="ECO:0000318"/>
    <property type="project" value="GO_Central"/>
</dbReference>
<dbReference type="CDD" id="cd00086">
    <property type="entry name" value="homeodomain"/>
    <property type="match status" value="1"/>
</dbReference>
<dbReference type="FunFam" id="1.10.10.60:FF:000520">
    <property type="entry name" value="homeobox protein VENTX"/>
    <property type="match status" value="1"/>
</dbReference>
<dbReference type="Gene3D" id="1.10.10.60">
    <property type="entry name" value="Homeodomain-like"/>
    <property type="match status" value="1"/>
</dbReference>
<dbReference type="InterPro" id="IPR001356">
    <property type="entry name" value="HD"/>
</dbReference>
<dbReference type="InterPro" id="IPR017970">
    <property type="entry name" value="Homeobox_CS"/>
</dbReference>
<dbReference type="InterPro" id="IPR050848">
    <property type="entry name" value="Homeobox_TF"/>
</dbReference>
<dbReference type="InterPro" id="IPR009057">
    <property type="entry name" value="Homeodomain-like_sf"/>
</dbReference>
<dbReference type="PANTHER" id="PTHR24333">
    <property type="entry name" value="HOMEO BOX HB9 LIKE A-RELATED"/>
    <property type="match status" value="1"/>
</dbReference>
<dbReference type="PANTHER" id="PTHR24333:SF5">
    <property type="entry name" value="VENT HOMEOBOX"/>
    <property type="match status" value="1"/>
</dbReference>
<dbReference type="Pfam" id="PF00046">
    <property type="entry name" value="Homeodomain"/>
    <property type="match status" value="1"/>
</dbReference>
<dbReference type="SMART" id="SM00389">
    <property type="entry name" value="HOX"/>
    <property type="match status" value="1"/>
</dbReference>
<dbReference type="SUPFAM" id="SSF46689">
    <property type="entry name" value="Homeodomain-like"/>
    <property type="match status" value="1"/>
</dbReference>
<dbReference type="PROSITE" id="PS00027">
    <property type="entry name" value="HOMEOBOX_1"/>
    <property type="match status" value="1"/>
</dbReference>
<dbReference type="PROSITE" id="PS50071">
    <property type="entry name" value="HOMEOBOX_2"/>
    <property type="match status" value="1"/>
</dbReference>
<sequence length="258" mass="27552">MRLSSSPPRGPQQLSSFGSVDWLSQSSCSGPTHTPRPADFSLGSLPGPGQTSGAREPPQAVSIKEAAGSSNLPAPERTMAGLSKEPNTLRAPRVRTAFTMEQVRTLEGVFQHHQYLSPLERKRLAREMQLSEVQIKTWFQNRRMKHKRQMQDPQLHSPFSGSLHAPPAFYSTSSGLANGLQLLCPWAPLSGPQALMLPPGSFWGLCQVAQEALASAGASCCGQPLASHPPTPGRPSLGPALSTGPRGLCAMPQTGDAF</sequence>
<keyword id="KW-0217">Developmental protein</keyword>
<keyword id="KW-0238">DNA-binding</keyword>
<keyword id="KW-0371">Homeobox</keyword>
<keyword id="KW-0539">Nucleus</keyword>
<keyword id="KW-1267">Proteomics identification</keyword>
<keyword id="KW-1185">Reference proteome</keyword>
<accession>O95231</accession>
<accession>Q32MZ3</accession>
<feature type="chain" id="PRO_0000305938" description="Homeobox protein VENTX">
    <location>
        <begin position="1"/>
        <end position="258"/>
    </location>
</feature>
<feature type="DNA-binding region" description="Homeobox" evidence="1">
    <location>
        <begin position="91"/>
        <end position="150"/>
    </location>
</feature>
<feature type="region of interest" description="Disordered" evidence="2">
    <location>
        <begin position="1"/>
        <end position="93"/>
    </location>
</feature>
<feature type="region of interest" description="Disordered" evidence="2">
    <location>
        <begin position="227"/>
        <end position="248"/>
    </location>
</feature>
<feature type="compositionally biased region" description="Polar residues" evidence="2">
    <location>
        <begin position="1"/>
        <end position="32"/>
    </location>
</feature>
<feature type="sequence variant" id="VAR_035243" description="In dbSNP:rs2240892." evidence="4">
    <original>L</original>
    <variation>P</variation>
    <location>
        <position position="42"/>
    </location>
</feature>
<feature type="sequence variant" id="VAR_035244" description="In dbSNP:rs2240891.">
    <original>M</original>
    <variation>V</variation>
    <location>
        <position position="79"/>
    </location>
</feature>
<feature type="sequence variant" id="VAR_049591" description="In dbSNP:rs2270192.">
    <original>E</original>
    <variation>K</variation>
    <location>
        <position position="101"/>
    </location>
</feature>
<feature type="sequence variant" id="VAR_049592" description="In dbSNP:rs9418952.">
    <original>G</original>
    <variation>R</variation>
    <location>
        <position position="191"/>
    </location>
</feature>
<feature type="sequence variant" id="VAR_061269" description="In dbSNP:rs9418953.">
    <original>G</original>
    <variation>D</variation>
    <location>
        <position position="247"/>
    </location>
</feature>
<evidence type="ECO:0000255" key="1">
    <source>
        <dbReference type="PROSITE-ProRule" id="PRU00108"/>
    </source>
</evidence>
<evidence type="ECO:0000256" key="2">
    <source>
        <dbReference type="SAM" id="MobiDB-lite"/>
    </source>
</evidence>
<evidence type="ECO:0000269" key="3">
    <source>
    </source>
</evidence>
<evidence type="ECO:0000269" key="4">
    <source>
    </source>
</evidence>
<evidence type="ECO:0000305" key="5"/>
<name>VENTX_HUMAN</name>
<proteinExistence type="evidence at protein level"/>
<comment type="function">
    <text>May be involved in ventralization.</text>
</comment>
<comment type="interaction">
    <interactant intactId="EBI-10191303">
        <id>O95231</id>
    </interactant>
    <interactant intactId="EBI-12318443">
        <id>Q8NFV4-4</id>
        <label>ABHD11</label>
    </interactant>
    <organismsDiffer>false</organismsDiffer>
    <experiments>3</experiments>
</comment>
<comment type="interaction">
    <interactant intactId="EBI-10191303">
        <id>O95231</id>
    </interactant>
    <interactant intactId="EBI-11976299">
        <id>Q5BKX5-3</id>
        <label>ACTMAP</label>
    </interactant>
    <organismsDiffer>false</organismsDiffer>
    <experiments>3</experiments>
</comment>
<comment type="interaction">
    <interactant intactId="EBI-10191303">
        <id>O95231</id>
    </interactant>
    <interactant intactId="EBI-10173507">
        <id>Q6UY14-3</id>
        <label>ADAMTSL4</label>
    </interactant>
    <organismsDiffer>false</organismsDiffer>
    <experiments>3</experiments>
</comment>
<comment type="interaction">
    <interactant intactId="EBI-10191303">
        <id>O95231</id>
    </interactant>
    <interactant intactId="EBI-948603">
        <id>Q03989</id>
        <label>ARID5A</label>
    </interactant>
    <organismsDiffer>false</organismsDiffer>
    <experiments>5</experiments>
</comment>
<comment type="interaction">
    <interactant intactId="EBI-10191303">
        <id>O95231</id>
    </interactant>
    <interactant intactId="EBI-2117357">
        <id>P15289</id>
        <label>ARSA</label>
    </interactant>
    <organismsDiffer>false</organismsDiffer>
    <experiments>3</experiments>
</comment>
<comment type="interaction">
    <interactant intactId="EBI-10191303">
        <id>O95231</id>
    </interactant>
    <interactant intactId="EBI-742695">
        <id>Q8N1L9</id>
        <label>BATF2</label>
    </interactant>
    <organismsDiffer>false</organismsDiffer>
    <experiments>3</experiments>
</comment>
<comment type="interaction">
    <interactant intactId="EBI-10191303">
        <id>O95231</id>
    </interactant>
    <interactant intactId="EBI-711810">
        <id>O14503</id>
        <label>BHLHE40</label>
    </interactant>
    <organismsDiffer>false</organismsDiffer>
    <experiments>3</experiments>
</comment>
<comment type="interaction">
    <interactant intactId="EBI-10191303">
        <id>O95231</id>
    </interactant>
    <interactant intactId="EBI-12809220">
        <id>Q5SWW7</id>
        <label>C10orf55</label>
    </interactant>
    <organismsDiffer>false</organismsDiffer>
    <experiments>3</experiments>
</comment>
<comment type="interaction">
    <interactant intactId="EBI-10191303">
        <id>O95231</id>
    </interactant>
    <interactant intactId="EBI-946029">
        <id>Q6P1W5</id>
        <label>C1orf94</label>
    </interactant>
    <organismsDiffer>false</organismsDiffer>
    <experiments>4</experiments>
</comment>
<comment type="interaction">
    <interactant intactId="EBI-10191303">
        <id>O95231</id>
    </interactant>
    <interactant intactId="EBI-11990870">
        <id>Q6UXA7</id>
        <label>C6orf15</label>
    </interactant>
    <organismsDiffer>false</organismsDiffer>
    <experiments>3</experiments>
</comment>
<comment type="interaction">
    <interactant intactId="EBI-10191303">
        <id>O95231</id>
    </interactant>
    <interactant intactId="EBI-4314501">
        <id>P40199</id>
        <label>CEACAM6</label>
    </interactant>
    <organismsDiffer>false</organismsDiffer>
    <experiments>3</experiments>
</comment>
<comment type="interaction">
    <interactant intactId="EBI-10191303">
        <id>O95231</id>
    </interactant>
    <interactant intactId="EBI-12261896">
        <id>Q5T4B2</id>
        <label>CERCAM</label>
    </interactant>
    <organismsDiffer>false</organismsDiffer>
    <experiments>3</experiments>
</comment>
<comment type="interaction">
    <interactant intactId="EBI-10191303">
        <id>O95231</id>
    </interactant>
    <interactant intactId="EBI-12360993">
        <id>P23141-3</id>
        <label>CES1</label>
    </interactant>
    <organismsDiffer>false</organismsDiffer>
    <experiments>3</experiments>
</comment>
<comment type="interaction">
    <interactant intactId="EBI-10191303">
        <id>O95231</id>
    </interactant>
    <interactant intactId="EBI-9038570">
        <id>P27918</id>
        <label>CFP</label>
    </interactant>
    <organismsDiffer>false</organismsDiffer>
    <experiments>5</experiments>
</comment>
<comment type="interaction">
    <interactant intactId="EBI-10191303">
        <id>O95231</id>
    </interactant>
    <interactant intactId="EBI-12884642">
        <id>Q03060-25</id>
        <label>CREM</label>
    </interactant>
    <organismsDiffer>false</organismsDiffer>
    <experiments>3</experiments>
</comment>
<comment type="interaction">
    <interactant intactId="EBI-10191303">
        <id>O95231</id>
    </interactant>
    <interactant intactId="EBI-2602175">
        <id>P07498</id>
        <label>CSN3</label>
    </interactant>
    <organismsDiffer>false</organismsDiffer>
    <experiments>3</experiments>
</comment>
<comment type="interaction">
    <interactant intactId="EBI-10191303">
        <id>O95231</id>
    </interactant>
    <interactant intactId="EBI-1188472">
        <id>P78358</id>
        <label>CTAG1B</label>
    </interactant>
    <organismsDiffer>false</organismsDiffer>
    <experiments>5</experiments>
</comment>
<comment type="interaction">
    <interactant intactId="EBI-10191303">
        <id>O95231</id>
    </interactant>
    <interactant intactId="EBI-3867333">
        <id>A8MQ03</id>
        <label>CYSRT1</label>
    </interactant>
    <organismsDiffer>false</organismsDiffer>
    <experiments>3</experiments>
</comment>
<comment type="interaction">
    <interactant intactId="EBI-10191303">
        <id>O95231</id>
    </interactant>
    <interactant intactId="EBI-7875264">
        <id>O75553</id>
        <label>DAB1</label>
    </interactant>
    <organismsDiffer>false</organismsDiffer>
    <experiments>4</experiments>
</comment>
<comment type="interaction">
    <interactant intactId="EBI-10191303">
        <id>O95231</id>
    </interactant>
    <interactant intactId="EBI-724310">
        <id>Q15038</id>
        <label>DAZAP2</label>
    </interactant>
    <organismsDiffer>false</organismsDiffer>
    <experiments>3</experiments>
</comment>
<comment type="interaction">
    <interactant intactId="EBI-10191303">
        <id>O95231</id>
    </interactant>
    <interactant intactId="EBI-12193763">
        <id>A1KXE4-2</id>
        <label>FAM168B</label>
    </interactant>
    <organismsDiffer>false</organismsDiffer>
    <experiments>3</experiments>
</comment>
<comment type="interaction">
    <interactant intactId="EBI-10191303">
        <id>O95231</id>
    </interactant>
    <interactant intactId="EBI-12845222">
        <id>Q9NVL1-2</id>
        <label>FAM86C1P</label>
    </interactant>
    <organismsDiffer>false</organismsDiffer>
    <experiments>3</experiments>
</comment>
<comment type="interaction">
    <interactant intactId="EBI-10191303">
        <id>O95231</id>
    </interactant>
    <interactant intactId="EBI-7251368">
        <id>Q9BZE0</id>
        <label>GLIS2</label>
    </interactant>
    <organismsDiffer>false</organismsDiffer>
    <experiments>3</experiments>
</comment>
<comment type="interaction">
    <interactant intactId="EBI-10191303">
        <id>O95231</id>
    </interactant>
    <interactant intactId="EBI-1752118">
        <id>P31273</id>
        <label>HOXC8</label>
    </interactant>
    <organismsDiffer>false</organismsDiffer>
    <experiments>3</experiments>
</comment>
<comment type="interaction">
    <interactant intactId="EBI-10191303">
        <id>O95231</id>
    </interactant>
    <interactant intactId="EBI-748258">
        <id>Q5TA45</id>
        <label>INTS11</label>
    </interactant>
    <organismsDiffer>false</organismsDiffer>
    <experiments>3</experiments>
</comment>
<comment type="interaction">
    <interactant intactId="EBI-10191303">
        <id>O95231</id>
    </interactant>
    <interactant intactId="EBI-11028396">
        <id>Q6UXX5</id>
        <label>ITIH6</label>
    </interactant>
    <organismsDiffer>false</organismsDiffer>
    <experiments>3</experiments>
</comment>
<comment type="interaction">
    <interactant intactId="EBI-10191303">
        <id>O95231</id>
    </interactant>
    <interactant intactId="EBI-14308786">
        <id>A4D0Q3</id>
        <label>KIAA1218</label>
    </interactant>
    <organismsDiffer>false</organismsDiffer>
    <experiments>3</experiments>
</comment>
<comment type="interaction">
    <interactant intactId="EBI-10191303">
        <id>O95231</id>
    </interactant>
    <interactant intactId="EBI-1047093">
        <id>O76011</id>
        <label>KRT34</label>
    </interactant>
    <organismsDiffer>false</organismsDiffer>
    <experiments>4</experiments>
</comment>
<comment type="interaction">
    <interactant intactId="EBI-10191303">
        <id>O95231</id>
    </interactant>
    <interactant intactId="EBI-10171774">
        <id>P60410</id>
        <label>KRTAP10-8</label>
    </interactant>
    <organismsDiffer>false</organismsDiffer>
    <experiments>3</experiments>
</comment>
<comment type="interaction">
    <interactant intactId="EBI-10191303">
        <id>O95231</id>
    </interactant>
    <interactant intactId="EBI-1052037">
        <id>Q8IUC1</id>
        <label>KRTAP11-1</label>
    </interactant>
    <organismsDiffer>false</organismsDiffer>
    <experiments>3</experiments>
</comment>
<comment type="interaction">
    <interactant intactId="EBI-10191303">
        <id>O95231</id>
    </interactant>
    <interactant intactId="EBI-10176379">
        <id>P59991</id>
        <label>KRTAP12-2</label>
    </interactant>
    <organismsDiffer>false</organismsDiffer>
    <experiments>6</experiments>
</comment>
<comment type="interaction">
    <interactant intactId="EBI-10191303">
        <id>O95231</id>
    </interactant>
    <interactant intactId="EBI-10176396">
        <id>P60329</id>
        <label>KRTAP12-4</label>
    </interactant>
    <organismsDiffer>false</organismsDiffer>
    <experiments>4</experiments>
</comment>
<comment type="interaction">
    <interactant intactId="EBI-10191303">
        <id>O95231</id>
    </interactant>
    <interactant intactId="EBI-12811111">
        <id>Q8IUB9</id>
        <label>KRTAP19-1</label>
    </interactant>
    <organismsDiffer>false</organismsDiffer>
    <experiments>5</experiments>
</comment>
<comment type="interaction">
    <interactant intactId="EBI-10191303">
        <id>O95231</id>
    </interactant>
    <interactant intactId="EBI-12196745">
        <id>Q3LHN2</id>
        <label>KRTAP19-2</label>
    </interactant>
    <organismsDiffer>false</organismsDiffer>
    <experiments>3</experiments>
</comment>
<comment type="interaction">
    <interactant intactId="EBI-10191303">
        <id>O95231</id>
    </interactant>
    <interactant intactId="EBI-12805508">
        <id>Q3LI70</id>
        <label>KRTAP19-6</label>
    </interactant>
    <organismsDiffer>false</organismsDiffer>
    <experiments>3</experiments>
</comment>
<comment type="interaction">
    <interactant intactId="EBI-10191303">
        <id>O95231</id>
    </interactant>
    <interactant intactId="EBI-10241353">
        <id>Q3SYF9</id>
        <label>KRTAP19-7</label>
    </interactant>
    <organismsDiffer>false</organismsDiffer>
    <experiments>3</experiments>
</comment>
<comment type="interaction">
    <interactant intactId="EBI-10191303">
        <id>O95231</id>
    </interactant>
    <interactant intactId="EBI-18395721">
        <id>Q3LI59</id>
        <label>KRTAP21-2</label>
    </interactant>
    <organismsDiffer>false</organismsDiffer>
    <experiments>3</experiments>
</comment>
<comment type="interaction">
    <interactant intactId="EBI-10191303">
        <id>O95231</id>
    </interactant>
    <interactant intactId="EBI-3957672">
        <id>Q6PEX3</id>
        <label>KRTAP26-1</label>
    </interactant>
    <organismsDiffer>false</organismsDiffer>
    <experiments>3</experiments>
</comment>
<comment type="interaction">
    <interactant intactId="EBI-10191303">
        <id>O95231</id>
    </interactant>
    <interactant intactId="EBI-9996449">
        <id>Q9BYR8</id>
        <label>KRTAP3-1</label>
    </interactant>
    <organismsDiffer>false</organismsDiffer>
    <experiments>3</experiments>
</comment>
<comment type="interaction">
    <interactant intactId="EBI-10191303">
        <id>O95231</id>
    </interactant>
    <interactant intactId="EBI-3957694">
        <id>Q9BYR6</id>
        <label>KRTAP3-3</label>
    </interactant>
    <organismsDiffer>false</organismsDiffer>
    <experiments>3</experiments>
</comment>
<comment type="interaction">
    <interactant intactId="EBI-10191303">
        <id>O95231</id>
    </interactant>
    <interactant intactId="EBI-12111050">
        <id>Q3LI64</id>
        <label>KRTAP6-1</label>
    </interactant>
    <organismsDiffer>false</organismsDiffer>
    <experiments>3</experiments>
</comment>
<comment type="interaction">
    <interactant intactId="EBI-10191303">
        <id>O95231</id>
    </interactant>
    <interactant intactId="EBI-11962084">
        <id>Q3LI66</id>
        <label>KRTAP6-2</label>
    </interactant>
    <organismsDiffer>false</organismsDiffer>
    <experiments>5</experiments>
</comment>
<comment type="interaction">
    <interactant intactId="EBI-10191303">
        <id>O95231</id>
    </interactant>
    <interactant intactId="EBI-22311199">
        <id>Q3LI67</id>
        <label>KRTAP6-3</label>
    </interactant>
    <organismsDiffer>false</organismsDiffer>
    <experiments>3</experiments>
</comment>
<comment type="interaction">
    <interactant intactId="EBI-10191303">
        <id>O95231</id>
    </interactant>
    <interactant intactId="EBI-10261141">
        <id>Q8IUC2</id>
        <label>KRTAP8-1</label>
    </interactant>
    <organismsDiffer>false</organismsDiffer>
    <experiments>3</experiments>
</comment>
<comment type="interaction">
    <interactant intactId="EBI-10191303">
        <id>O95231</id>
    </interactant>
    <interactant intactId="EBI-725647">
        <id>Q99732</id>
        <label>LITAF</label>
    </interactant>
    <organismsDiffer>false</organismsDiffer>
    <experiments>3</experiments>
</comment>
<comment type="interaction">
    <interactant intactId="EBI-10191303">
        <id>O95231</id>
    </interactant>
    <interactant intactId="EBI-13309213">
        <id>Q8N1E2</id>
        <label>LYG1</label>
    </interactant>
    <organismsDiffer>false</organismsDiffer>
    <experiments>3</experiments>
</comment>
<comment type="interaction">
    <interactant intactId="EBI-10191303">
        <id>O95231</id>
    </interactant>
    <interactant intactId="EBI-716006">
        <id>Q9Y5V3</id>
        <label>MAGED1</label>
    </interactant>
    <organismsDiffer>false</organismsDiffer>
    <experiments>3</experiments>
</comment>
<comment type="interaction">
    <interactant intactId="EBI-10191303">
        <id>O95231</id>
    </interactant>
    <interactant intactId="EBI-6137472">
        <id>Q9BRT3</id>
        <label>MIEN1</label>
    </interactant>
    <organismsDiffer>false</organismsDiffer>
    <experiments>3</experiments>
</comment>
<comment type="interaction">
    <interactant intactId="EBI-10191303">
        <id>O95231</id>
    </interactant>
    <interactant intactId="EBI-5774125">
        <id>A1E959</id>
        <label>ODAM</label>
    </interactant>
    <organismsDiffer>false</organismsDiffer>
    <experiments>3</experiments>
</comment>
<comment type="interaction">
    <interactant intactId="EBI-10191303">
        <id>O95231</id>
    </interactant>
    <interactant intactId="EBI-12826629">
        <id>Q9BZM2-2</id>
        <label>PLA2G2F</label>
    </interactant>
    <organismsDiffer>false</organismsDiffer>
    <experiments>3</experiments>
</comment>
<comment type="interaction">
    <interactant intactId="EBI-10191303">
        <id>O95231</id>
    </interactant>
    <interactant intactId="EBI-12832742">
        <id>Q9UF11-2</id>
        <label>PLEKHB1</label>
    </interactant>
    <organismsDiffer>false</organismsDiffer>
    <experiments>3</experiments>
</comment>
<comment type="interaction">
    <interactant intactId="EBI-10191303">
        <id>O95231</id>
    </interactant>
    <interactant intactId="EBI-12029004">
        <id>P78424</id>
        <label>POU6F2</label>
    </interactant>
    <organismsDiffer>false</organismsDiffer>
    <experiments>3</experiments>
</comment>
<comment type="interaction">
    <interactant intactId="EBI-10191303">
        <id>O95231</id>
    </interactant>
    <interactant intactId="EBI-12754095">
        <id>P86480</id>
        <label>PRR20D</label>
    </interactant>
    <organismsDiffer>false</organismsDiffer>
    <experiments>3</experiments>
</comment>
<comment type="interaction">
    <interactant intactId="EBI-10191303">
        <id>O95231</id>
    </interactant>
    <interactant intactId="EBI-12123390">
        <id>Q9NWB1-5</id>
        <label>RBFOX1</label>
    </interactant>
    <organismsDiffer>false</organismsDiffer>
    <experiments>3</experiments>
</comment>
<comment type="interaction">
    <interactant intactId="EBI-10191303">
        <id>O95231</id>
    </interactant>
    <interactant intactId="EBI-740322">
        <id>Q93062</id>
        <label>RBPMS</label>
    </interactant>
    <organismsDiffer>false</organismsDiffer>
    <experiments>4</experiments>
</comment>
<comment type="interaction">
    <interactant intactId="EBI-10191303">
        <id>O95231</id>
    </interactant>
    <interactant intactId="EBI-372094">
        <id>Q9BQY4</id>
        <label>RHOXF2</label>
    </interactant>
    <organismsDiffer>false</organismsDiffer>
    <experiments>3</experiments>
</comment>
<comment type="interaction">
    <interactant intactId="EBI-10191303">
        <id>O95231</id>
    </interactant>
    <interactant intactId="EBI-2340927">
        <id>P78317</id>
        <label>RNF4</label>
    </interactant>
    <organismsDiffer>false</organismsDiffer>
    <experiments>3</experiments>
</comment>
<comment type="interaction">
    <interactant intactId="EBI-10191303">
        <id>O95231</id>
    </interactant>
    <interactant intactId="EBI-6422642">
        <id>Q01974</id>
        <label>ROR2</label>
    </interactant>
    <organismsDiffer>false</organismsDiffer>
    <experiments>3</experiments>
</comment>
<comment type="interaction">
    <interactant intactId="EBI-10191303">
        <id>O95231</id>
    </interactant>
    <interactant intactId="EBI-1054572">
        <id>Q96LW2</id>
        <label>RSKR</label>
    </interactant>
    <organismsDiffer>false</organismsDiffer>
    <experiments>3</experiments>
</comment>
<comment type="interaction">
    <interactant intactId="EBI-10191303">
        <id>O95231</id>
    </interactant>
    <interactant intactId="EBI-12806032">
        <id>Q16348</id>
        <label>SLC15A2</label>
    </interactant>
    <organismsDiffer>false</organismsDiffer>
    <experiments>3</experiments>
</comment>
<comment type="interaction">
    <interactant intactId="EBI-10191303">
        <id>O95231</id>
    </interactant>
    <interactant intactId="EBI-12275818">
        <id>Q53HV7-2</id>
        <label>SMUG1</label>
    </interactant>
    <organismsDiffer>false</organismsDiffer>
    <experiments>3</experiments>
</comment>
<comment type="interaction">
    <interactant intactId="EBI-10191303">
        <id>O95231</id>
    </interactant>
    <interactant intactId="EBI-9087806">
        <id>O95416</id>
        <label>SOX14</label>
    </interactant>
    <organismsDiffer>false</organismsDiffer>
    <experiments>3</experiments>
</comment>
<comment type="interaction">
    <interactant intactId="EBI-10191303">
        <id>O95231</id>
    </interactant>
    <interactant intactId="EBI-354861">
        <id>Q9C004</id>
        <label>SPRY4</label>
    </interactant>
    <organismsDiffer>false</organismsDiffer>
    <experiments>3</experiments>
</comment>
<comment type="interaction">
    <interactant intactId="EBI-10191303">
        <id>O95231</id>
    </interactant>
    <interactant intactId="EBI-2682386">
        <id>Q96PV0</id>
        <label>SYNGAP1</label>
    </interactant>
    <organismsDiffer>false</organismsDiffer>
    <experiments>3</experiments>
</comment>
<comment type="interaction">
    <interactant intactId="EBI-10191303">
        <id>O95231</id>
    </interactant>
    <interactant intactId="EBI-10191361">
        <id>Q96SF7</id>
        <label>TBX15</label>
    </interactant>
    <organismsDiffer>false</organismsDiffer>
    <experiments>4</experiments>
</comment>
<comment type="interaction">
    <interactant intactId="EBI-10191303">
        <id>O95231</id>
    </interactant>
    <interactant intactId="EBI-12096770">
        <id>O60806</id>
        <label>TBX19</label>
    </interactant>
    <organismsDiffer>false</organismsDiffer>
    <experiments>3</experiments>
</comment>
<comment type="interaction">
    <interactant intactId="EBI-10191303">
        <id>O95231</id>
    </interactant>
    <interactant intactId="EBI-6427217">
        <id>Q9Y458</id>
        <label>TBX22</label>
    </interactant>
    <organismsDiffer>false</organismsDiffer>
    <experiments>6</experiments>
</comment>
<comment type="interaction">
    <interactant intactId="EBI-10191303">
        <id>O95231</id>
    </interactant>
    <interactant intactId="EBI-10239812">
        <id>Q96M29</id>
        <label>TEKT5</label>
    </interactant>
    <organismsDiffer>false</organismsDiffer>
    <experiments>3</experiments>
</comment>
<comment type="interaction">
    <interactant intactId="EBI-10191303">
        <id>O95231</id>
    </interactant>
    <interactant intactId="EBI-12924766">
        <id>Q7Z782</id>
        <label>TMBIM4</label>
    </interactant>
    <organismsDiffer>false</organismsDiffer>
    <experiments>3</experiments>
</comment>
<comment type="interaction">
    <interactant intactId="EBI-10191303">
        <id>O95231</id>
    </interactant>
    <interactant intactId="EBI-12038591">
        <id>Q69YG0</id>
        <label>TMEM42</label>
    </interactant>
    <organismsDiffer>false</organismsDiffer>
    <experiments>3</experiments>
</comment>
<comment type="interaction">
    <interactant intactId="EBI-10191303">
        <id>O95231</id>
    </interactant>
    <interactant intactId="EBI-358993">
        <id>Q15645</id>
        <label>TRIP13</label>
    </interactant>
    <organismsDiffer>false</organismsDiffer>
    <experiments>3</experiments>
</comment>
<comment type="interaction">
    <interactant intactId="EBI-10191303">
        <id>O95231</id>
    </interactant>
    <interactant intactId="EBI-12806590">
        <id>Q86WV8</id>
        <label>TSC1</label>
    </interactant>
    <organismsDiffer>false</organismsDiffer>
    <experiments>3</experiments>
</comment>
<comment type="interaction">
    <interactant intactId="EBI-10191303">
        <id>O95231</id>
    </interactant>
    <interactant intactId="EBI-2514383">
        <id>Q5T6F2</id>
        <label>UBAP2</label>
    </interactant>
    <organismsDiffer>false</organismsDiffer>
    <experiments>3</experiments>
</comment>
<comment type="interaction">
    <interactant intactId="EBI-10191303">
        <id>O95231</id>
    </interactant>
    <interactant intactId="EBI-10180829">
        <id>Q7KZS0</id>
        <label>UBE2I</label>
    </interactant>
    <organismsDiffer>false</organismsDiffer>
    <experiments>3</experiments>
</comment>
<comment type="interaction">
    <interactant intactId="EBI-10191303">
        <id>O95231</id>
    </interactant>
    <interactant intactId="EBI-947187">
        <id>Q9UHD9</id>
        <label>UBQLN2</label>
    </interactant>
    <organismsDiffer>false</organismsDiffer>
    <experiments>3</experiments>
</comment>
<comment type="interaction">
    <interactant intactId="EBI-10191303">
        <id>O95231</id>
    </interactant>
    <interactant intactId="EBI-11975223">
        <id>Q70EL1-9</id>
        <label>USP54</label>
    </interactant>
    <organismsDiffer>false</organismsDiffer>
    <experiments>3</experiments>
</comment>
<comment type="interaction">
    <interactant intactId="EBI-10191303">
        <id>O95231</id>
    </interactant>
    <interactant intactId="EBI-2107455">
        <id>Q08AM6</id>
        <label>VAC14</label>
    </interactant>
    <organismsDiffer>false</organismsDiffer>
    <experiments>3</experiments>
</comment>
<comment type="interaction">
    <interactant intactId="EBI-10191303">
        <id>O95231</id>
    </interactant>
    <interactant intactId="EBI-10254232">
        <id>Q6RSH7</id>
        <label>VHLL</label>
    </interactant>
    <organismsDiffer>false</organismsDiffer>
    <experiments>3</experiments>
</comment>
<comment type="interaction">
    <interactant intactId="EBI-10191303">
        <id>O95231</id>
    </interactant>
    <interactant intactId="EBI-12040603">
        <id>Q9NZC7-5</id>
        <label>WWOX</label>
    </interactant>
    <organismsDiffer>false</organismsDiffer>
    <experiments>5</experiments>
</comment>
<comment type="interaction">
    <interactant intactId="EBI-10191303">
        <id>O95231</id>
    </interactant>
    <interactant intactId="EBI-10188476">
        <id>A0A0C4DGF1</id>
        <label>ZBTB32</label>
    </interactant>
    <organismsDiffer>false</organismsDiffer>
    <experiments>5</experiments>
</comment>
<comment type="subcellular location">
    <subcellularLocation>
        <location evidence="5">Nucleus</location>
    </subcellularLocation>
</comment>
<comment type="tissue specificity">
    <text evidence="3">Expressed in bone marrow of patients recovering from chemotherapy. Also expressed in an erythroleukemia cell line.</text>
</comment>
<gene>
    <name type="primary">VENTX</name>
    <name type="synonym">HPX42B</name>
    <name type="synonym">VENTX2</name>
</gene>
<organism>
    <name type="scientific">Homo sapiens</name>
    <name type="common">Human</name>
    <dbReference type="NCBI Taxonomy" id="9606"/>
    <lineage>
        <taxon>Eukaryota</taxon>
        <taxon>Metazoa</taxon>
        <taxon>Chordata</taxon>
        <taxon>Craniata</taxon>
        <taxon>Vertebrata</taxon>
        <taxon>Euteleostomi</taxon>
        <taxon>Mammalia</taxon>
        <taxon>Eutheria</taxon>
        <taxon>Euarchontoglires</taxon>
        <taxon>Primates</taxon>
        <taxon>Haplorrhini</taxon>
        <taxon>Catarrhini</taxon>
        <taxon>Hominidae</taxon>
        <taxon>Homo</taxon>
    </lineage>
</organism>